<keyword id="KW-0325">Glycoprotein</keyword>
<keyword id="KW-0378">Hydrolase</keyword>
<keyword id="KW-0442">Lipid degradation</keyword>
<keyword id="KW-0443">Lipid metabolism</keyword>
<keyword id="KW-1185">Reference proteome</keyword>
<keyword id="KW-0964">Secreted</keyword>
<keyword id="KW-0732">Signal</keyword>
<organism>
    <name type="scientific">Arthroderma benhamiae (strain ATCC MYA-4681 / CBS 112371)</name>
    <name type="common">Trichophyton mentagrophytes</name>
    <dbReference type="NCBI Taxonomy" id="663331"/>
    <lineage>
        <taxon>Eukaryota</taxon>
        <taxon>Fungi</taxon>
        <taxon>Dikarya</taxon>
        <taxon>Ascomycota</taxon>
        <taxon>Pezizomycotina</taxon>
        <taxon>Eurotiomycetes</taxon>
        <taxon>Eurotiomycetidae</taxon>
        <taxon>Onygenales</taxon>
        <taxon>Arthrodermataceae</taxon>
        <taxon>Trichophyton</taxon>
    </lineage>
</organism>
<name>LIP2_ARTBC</name>
<protein>
    <recommendedName>
        <fullName evidence="5">Secreted lipase ARB_01498</fullName>
        <ecNumber evidence="1">3.1.1.3</ecNumber>
    </recommendedName>
</protein>
<reference key="1">
    <citation type="journal article" date="2011" name="Genome Biol.">
        <title>Comparative and functional genomics provide insights into the pathogenicity of dermatophytic fungi.</title>
        <authorList>
            <person name="Burmester A."/>
            <person name="Shelest E."/>
            <person name="Gloeckner G."/>
            <person name="Heddergott C."/>
            <person name="Schindler S."/>
            <person name="Staib P."/>
            <person name="Heidel A."/>
            <person name="Felder M."/>
            <person name="Petzold A."/>
            <person name="Szafranski K."/>
            <person name="Feuermann M."/>
            <person name="Pedruzzi I."/>
            <person name="Priebe S."/>
            <person name="Groth M."/>
            <person name="Winkler R."/>
            <person name="Li W."/>
            <person name="Kniemeyer O."/>
            <person name="Schroeckh V."/>
            <person name="Hertweck C."/>
            <person name="Hube B."/>
            <person name="White T.C."/>
            <person name="Platzer M."/>
            <person name="Guthke R."/>
            <person name="Heitman J."/>
            <person name="Woestemeyer J."/>
            <person name="Zipfel P.F."/>
            <person name="Monod M."/>
            <person name="Brakhage A.A."/>
        </authorList>
    </citation>
    <scope>NUCLEOTIDE SEQUENCE [LARGE SCALE GENOMIC DNA]</scope>
    <source>
        <strain>ATCC MYA-4681 / CBS 112371</strain>
    </source>
</reference>
<reference key="2">
    <citation type="journal article" date="2011" name="Proteomics">
        <title>Identification of novel secreted proteases during extracellular proteolysis by dermatophytes at acidic pH.</title>
        <authorList>
            <person name="Sriranganadane D."/>
            <person name="Waridel P."/>
            <person name="Salamin K."/>
            <person name="Feuermann M."/>
            <person name="Mignon B."/>
            <person name="Staib P."/>
            <person name="Neuhaus J.M."/>
            <person name="Quadroni M."/>
            <person name="Monod M."/>
        </authorList>
    </citation>
    <scope>IDENTIFICATION BY MASS SPECTROMETRY</scope>
    <scope>SUBCELLULAR LOCATION</scope>
</reference>
<accession>D4AZ78</accession>
<gene>
    <name type="ORF">ARB_01498</name>
</gene>
<proteinExistence type="evidence at protein level"/>
<comment type="catalytic activity">
    <reaction evidence="1">
        <text>a triacylglycerol + H2O = a diacylglycerol + a fatty acid + H(+)</text>
        <dbReference type="Rhea" id="RHEA:12044"/>
        <dbReference type="ChEBI" id="CHEBI:15377"/>
        <dbReference type="ChEBI" id="CHEBI:15378"/>
        <dbReference type="ChEBI" id="CHEBI:17855"/>
        <dbReference type="ChEBI" id="CHEBI:18035"/>
        <dbReference type="ChEBI" id="CHEBI:28868"/>
        <dbReference type="EC" id="3.1.1.3"/>
    </reaction>
</comment>
<comment type="subcellular location">
    <subcellularLocation>
        <location evidence="4">Secreted</location>
    </subcellularLocation>
</comment>
<comment type="similarity">
    <text evidence="5">Belongs to the type-B carboxylesterase/lipase family.</text>
</comment>
<evidence type="ECO:0000250" key="1">
    <source>
        <dbReference type="UniProtKB" id="P32946"/>
    </source>
</evidence>
<evidence type="ECO:0000255" key="2"/>
<evidence type="ECO:0000255" key="3">
    <source>
        <dbReference type="PROSITE-ProRule" id="PRU00498"/>
    </source>
</evidence>
<evidence type="ECO:0000269" key="4">
    <source>
    </source>
</evidence>
<evidence type="ECO:0000305" key="5"/>
<sequence>MFVQLLTYGLVAASTLQGVFASTKLPILDLPYGRWRAAKYDEAADDGSYGPPCIPGPDAPGFEDPSYKRQQKAAREDCLFLDAYVPGNALRNRGHRKLPVIVWVYGGGYSLGSKDLAIEEGIYDGNSLVQRAAGNAIVITFNYRLSALGWLAGTTMENEGLPNAGLHDQRAVFEWVRDYVHLLGGDRDKVSAWGESAGGGSILSHITANQGIVDPLFKRAVVMSPGLDFPIDRKGSVENQFKAFASRAGCAGQGLACLRAANISQLIEASYKDLGQIGPTPDGRVLKHVFSVDIAQGNYWRHLDSLIISHVYDEGGPFVGNDSTLESLSGFLKSNFPTYATEAVSTLEDYYHLKAPSNESVRAIGSRLIRDAIFTCNIRDILRKYSKKSYLMQYSPKEATHGQDVFALWYSPKLWNVSIPLFSGYQSYFLSHAITGDPNTLRDRDISPPTIAWPKVGDINAEKLENTLDVVDTGYKLISDNQVLKSTCDLWQKLLLDVTKQGGYLDI</sequence>
<feature type="signal peptide" evidence="2">
    <location>
        <begin position="1"/>
        <end position="21"/>
    </location>
</feature>
<feature type="chain" id="PRO_0000434658" description="Secreted lipase ARB_01498" evidence="2">
    <location>
        <begin position="22"/>
        <end position="507"/>
    </location>
</feature>
<feature type="active site" description="Acyl-ester intermediate" evidence="1">
    <location>
        <position position="196"/>
    </location>
</feature>
<feature type="glycosylation site" description="N-linked (GlcNAc...) asparagine" evidence="3">
    <location>
        <position position="262"/>
    </location>
</feature>
<feature type="glycosylation site" description="N-linked (GlcNAc...) asparagine" evidence="3">
    <location>
        <position position="321"/>
    </location>
</feature>
<feature type="glycosylation site" description="N-linked (GlcNAc...) asparagine" evidence="3">
    <location>
        <position position="358"/>
    </location>
</feature>
<feature type="glycosylation site" description="N-linked (GlcNAc...) asparagine" evidence="3">
    <location>
        <position position="416"/>
    </location>
</feature>
<dbReference type="EC" id="3.1.1.3" evidence="1"/>
<dbReference type="EMBL" id="ABSU01000020">
    <property type="protein sequence ID" value="EFE31598.1"/>
    <property type="molecule type" value="Genomic_DNA"/>
</dbReference>
<dbReference type="RefSeq" id="XP_003012238.1">
    <property type="nucleotide sequence ID" value="XM_003012192.1"/>
</dbReference>
<dbReference type="SMR" id="D4AZ78"/>
<dbReference type="ESTHER" id="trivh-d4dem7">
    <property type="family name" value="Fungal_carboxylesterase_lipase"/>
</dbReference>
<dbReference type="GeneID" id="9519806"/>
<dbReference type="KEGG" id="abe:ARB_01498"/>
<dbReference type="eggNOG" id="KOG4389">
    <property type="taxonomic scope" value="Eukaryota"/>
</dbReference>
<dbReference type="HOGENOM" id="CLU_006586_10_5_1"/>
<dbReference type="OMA" id="GTTMENE"/>
<dbReference type="Proteomes" id="UP000008866">
    <property type="component" value="Unassembled WGS sequence"/>
</dbReference>
<dbReference type="GO" id="GO:0005576">
    <property type="term" value="C:extracellular region"/>
    <property type="evidence" value="ECO:0007669"/>
    <property type="project" value="UniProtKB-SubCell"/>
</dbReference>
<dbReference type="GO" id="GO:0004806">
    <property type="term" value="F:triacylglycerol lipase activity"/>
    <property type="evidence" value="ECO:0007669"/>
    <property type="project" value="UniProtKB-EC"/>
</dbReference>
<dbReference type="GO" id="GO:0016042">
    <property type="term" value="P:lipid catabolic process"/>
    <property type="evidence" value="ECO:0007669"/>
    <property type="project" value="UniProtKB-KW"/>
</dbReference>
<dbReference type="Gene3D" id="3.40.50.1820">
    <property type="entry name" value="alpha/beta hydrolase"/>
    <property type="match status" value="1"/>
</dbReference>
<dbReference type="InterPro" id="IPR029058">
    <property type="entry name" value="AB_hydrolase_fold"/>
</dbReference>
<dbReference type="InterPro" id="IPR002018">
    <property type="entry name" value="CarbesteraseB"/>
</dbReference>
<dbReference type="PANTHER" id="PTHR45570">
    <property type="entry name" value="CARBOXYLIC ESTER HYDROLASE"/>
    <property type="match status" value="1"/>
</dbReference>
<dbReference type="PANTHER" id="PTHR45570:SF1">
    <property type="entry name" value="CARBOXYLIC ESTER HYDROLASE"/>
    <property type="match status" value="1"/>
</dbReference>
<dbReference type="Pfam" id="PF00135">
    <property type="entry name" value="COesterase"/>
    <property type="match status" value="1"/>
</dbReference>
<dbReference type="SUPFAM" id="SSF53474">
    <property type="entry name" value="alpha/beta-Hydrolases"/>
    <property type="match status" value="1"/>
</dbReference>